<name>MPCP1_ARATH</name>
<proteinExistence type="evidence at transcript level"/>
<organism>
    <name type="scientific">Arabidopsis thaliana</name>
    <name type="common">Mouse-ear cress</name>
    <dbReference type="NCBI Taxonomy" id="3702"/>
    <lineage>
        <taxon>Eukaryota</taxon>
        <taxon>Viridiplantae</taxon>
        <taxon>Streptophyta</taxon>
        <taxon>Embryophyta</taxon>
        <taxon>Tracheophyta</taxon>
        <taxon>Spermatophyta</taxon>
        <taxon>Magnoliopsida</taxon>
        <taxon>eudicotyledons</taxon>
        <taxon>Gunneridae</taxon>
        <taxon>Pentapetalae</taxon>
        <taxon>rosids</taxon>
        <taxon>malvids</taxon>
        <taxon>Brassicales</taxon>
        <taxon>Brassicaceae</taxon>
        <taxon>Camelineae</taxon>
        <taxon>Arabidopsis</taxon>
    </lineage>
</organism>
<feature type="chain" id="PRO_0000421695" description="Mitochondrial phosphate carrier protein 1, mitochondrial">
    <location>
        <begin position="1"/>
        <end position="309"/>
    </location>
</feature>
<feature type="topological domain" description="Mitochondrial intermembrane" evidence="2">
    <location>
        <begin position="1"/>
        <end position="15"/>
    </location>
</feature>
<feature type="transmembrane region" description="Helical; Name=1" evidence="2">
    <location>
        <begin position="16"/>
        <end position="36"/>
    </location>
</feature>
<feature type="topological domain" description="Mitochondrial matrix" evidence="2">
    <location>
        <begin position="37"/>
        <end position="74"/>
    </location>
</feature>
<feature type="transmembrane region" description="Helical; Name=2" evidence="2">
    <location>
        <begin position="75"/>
        <end position="94"/>
    </location>
</feature>
<feature type="topological domain" description="Mitochondrial intermembrane" evidence="2">
    <location>
        <begin position="95"/>
        <end position="111"/>
    </location>
</feature>
<feature type="transmembrane region" description="Helical; Name=3" evidence="2">
    <location>
        <begin position="112"/>
        <end position="132"/>
    </location>
</feature>
<feature type="topological domain" description="Mitochondrial matrix" evidence="2">
    <location>
        <begin position="133"/>
        <end position="167"/>
    </location>
</feature>
<feature type="transmembrane region" description="Helical; Name=4" evidence="2">
    <location>
        <begin position="168"/>
        <end position="187"/>
    </location>
</feature>
<feature type="topological domain" description="Mitochondrial intermembrane" evidence="2">
    <location>
        <begin position="188"/>
        <end position="208"/>
    </location>
</feature>
<feature type="transmembrane region" description="Helical; Name=5" evidence="2">
    <location>
        <begin position="209"/>
        <end position="229"/>
    </location>
</feature>
<feature type="topological domain" description="Mitochondrial matrix" evidence="2">
    <location>
        <begin position="230"/>
        <end position="268"/>
    </location>
</feature>
<feature type="transmembrane region" description="Helical; Name=6" evidence="2">
    <location>
        <begin position="269"/>
        <end position="289"/>
    </location>
</feature>
<feature type="topological domain" description="Mitochondrial intermembrane" evidence="2">
    <location>
        <begin position="290"/>
        <end position="309"/>
    </location>
</feature>
<feature type="repeat" description="Solcar 1">
    <location>
        <begin position="16"/>
        <end position="100"/>
    </location>
</feature>
<feature type="repeat" description="Solcar 2">
    <location>
        <begin position="109"/>
        <end position="193"/>
    </location>
</feature>
<feature type="repeat" description="Solcar 3">
    <location>
        <begin position="210"/>
        <end position="289"/>
    </location>
</feature>
<evidence type="ECO:0000250" key="1"/>
<evidence type="ECO:0000255" key="2"/>
<evidence type="ECO:0000269" key="3">
    <source>
    </source>
</evidence>
<evidence type="ECO:0000305" key="4"/>
<evidence type="ECO:0000305" key="5">
    <source>
    </source>
</evidence>
<sequence>MTRVKSKLDEELSSPWFYTVCTMGGMLSAGTTHLAITPLDVLKVNMQVNPVKYNSIPSGFSTLLREHGHSYLWRGWSGKLLGYGVQGGCRFGLYEYFKTLYSDVLPNHNRTSIYFLSSASAQIFADMALCPFEAIKVRVQTQPMFAKGLLDGFPRVYRSEGLAGFHRGLFPLWCRNLPFSMVMFSTFEQSVEFIYQKIIQKRKQDCSKAQQLGVTCLAGYTAGAVGTIISNPADVVLSSLYNNKAKNVLQAVRNIGFVGLFTRSLPVRITIVGPVITLQWFFYDAIKVLSGFPTSGGVKKPVDAAKLSV</sequence>
<accession>Q7DNC3</accession>
<dbReference type="EMBL" id="CP002685">
    <property type="protein sequence ID" value="AEC06606.1"/>
    <property type="molecule type" value="Genomic_DNA"/>
</dbReference>
<dbReference type="EMBL" id="BT010199">
    <property type="protein sequence ID" value="AAQ22668.1"/>
    <property type="molecule type" value="mRNA"/>
</dbReference>
<dbReference type="EMBL" id="AK227300">
    <property type="protein sequence ID" value="BAE99316.1"/>
    <property type="molecule type" value="mRNA"/>
</dbReference>
<dbReference type="PIR" id="B84550">
    <property type="entry name" value="B84550"/>
</dbReference>
<dbReference type="RefSeq" id="NP_179319.1">
    <property type="nucleotide sequence ID" value="NM_127282.3"/>
</dbReference>
<dbReference type="SMR" id="Q7DNC3"/>
<dbReference type="FunCoup" id="Q7DNC3">
    <property type="interactions" value="283"/>
</dbReference>
<dbReference type="STRING" id="3702.Q7DNC3"/>
<dbReference type="PaxDb" id="3702-AT2G17270.1"/>
<dbReference type="ProteomicsDB" id="238269"/>
<dbReference type="EnsemblPlants" id="AT2G17270.1">
    <property type="protein sequence ID" value="AT2G17270.1"/>
    <property type="gene ID" value="AT2G17270"/>
</dbReference>
<dbReference type="GeneID" id="816233"/>
<dbReference type="Gramene" id="AT2G17270.1">
    <property type="protein sequence ID" value="AT2G17270.1"/>
    <property type="gene ID" value="AT2G17270"/>
</dbReference>
<dbReference type="KEGG" id="ath:AT2G17270"/>
<dbReference type="Araport" id="AT2G17270"/>
<dbReference type="TAIR" id="AT2G17270">
    <property type="gene designation" value="PHT3"/>
</dbReference>
<dbReference type="eggNOG" id="KOG0767">
    <property type="taxonomic scope" value="Eukaryota"/>
</dbReference>
<dbReference type="HOGENOM" id="CLU_039456_0_1_1"/>
<dbReference type="InParanoid" id="Q7DNC3"/>
<dbReference type="OMA" id="IYAQCKT"/>
<dbReference type="PhylomeDB" id="Q7DNC3"/>
<dbReference type="PRO" id="PR:Q7DNC3"/>
<dbReference type="Proteomes" id="UP000006548">
    <property type="component" value="Chromosome 2"/>
</dbReference>
<dbReference type="ExpressionAtlas" id="Q7DNC3">
    <property type="expression patterns" value="baseline and differential"/>
</dbReference>
<dbReference type="GO" id="GO:0005743">
    <property type="term" value="C:mitochondrial inner membrane"/>
    <property type="evidence" value="ECO:0007669"/>
    <property type="project" value="UniProtKB-SubCell"/>
</dbReference>
<dbReference type="GO" id="GO:0005315">
    <property type="term" value="F:phosphate transmembrane transporter activity"/>
    <property type="evidence" value="ECO:0007669"/>
    <property type="project" value="InterPro"/>
</dbReference>
<dbReference type="GO" id="GO:1990547">
    <property type="term" value="P:mitochondrial phosphate ion transmembrane transport"/>
    <property type="evidence" value="ECO:0007669"/>
    <property type="project" value="InterPro"/>
</dbReference>
<dbReference type="GO" id="GO:0009651">
    <property type="term" value="P:response to salt stress"/>
    <property type="evidence" value="ECO:0000315"/>
    <property type="project" value="TAIR"/>
</dbReference>
<dbReference type="FunFam" id="1.50.40.10:FF:000070">
    <property type="entry name" value="Mitochondrial phosphate carrier protein 1, mitochondrial"/>
    <property type="match status" value="1"/>
</dbReference>
<dbReference type="Gene3D" id="1.50.40.10">
    <property type="entry name" value="Mitochondrial carrier domain"/>
    <property type="match status" value="1"/>
</dbReference>
<dbReference type="InterPro" id="IPR018108">
    <property type="entry name" value="Mitochondrial_sb/sol_carrier"/>
</dbReference>
<dbReference type="InterPro" id="IPR023395">
    <property type="entry name" value="Mt_carrier_dom_sf"/>
</dbReference>
<dbReference type="InterPro" id="IPR044677">
    <property type="entry name" value="SLC25A3/Pic2/Mir1-like"/>
</dbReference>
<dbReference type="PANTHER" id="PTHR45671:SF4">
    <property type="entry name" value="MITOCHONDRIAL PHOSPHATE CARRIER PROTEIN 1, MITOCHONDRIAL"/>
    <property type="match status" value="1"/>
</dbReference>
<dbReference type="PANTHER" id="PTHR45671">
    <property type="entry name" value="SOLUTE CARRIER FAMILY 25 (MITOCHONDRIAL CARRIER PHOSPHATE CARRIER), MEMBER 3, LIKE-RELATED-RELATED"/>
    <property type="match status" value="1"/>
</dbReference>
<dbReference type="Pfam" id="PF00153">
    <property type="entry name" value="Mito_carr"/>
    <property type="match status" value="2"/>
</dbReference>
<dbReference type="SUPFAM" id="SSF103506">
    <property type="entry name" value="Mitochondrial carrier"/>
    <property type="match status" value="1"/>
</dbReference>
<dbReference type="PROSITE" id="PS50920">
    <property type="entry name" value="SOLCAR"/>
    <property type="match status" value="3"/>
</dbReference>
<protein>
    <recommendedName>
        <fullName>Mitochondrial phosphate carrier protein 1, mitochondrial</fullName>
    </recommendedName>
    <alternativeName>
        <fullName>Mitochondrial phosphate transporter 1</fullName>
        <shortName>MPT1</shortName>
    </alternativeName>
    <alternativeName>
        <fullName>Phosphate transporter 3;3</fullName>
    </alternativeName>
</protein>
<keyword id="KW-0472">Membrane</keyword>
<keyword id="KW-0496">Mitochondrion</keyword>
<keyword id="KW-0999">Mitochondrion inner membrane</keyword>
<keyword id="KW-1185">Reference proteome</keyword>
<keyword id="KW-0677">Repeat</keyword>
<keyword id="KW-0812">Transmembrane</keyword>
<keyword id="KW-1133">Transmembrane helix</keyword>
<keyword id="KW-0813">Transport</keyword>
<reference key="1">
    <citation type="journal article" date="1999" name="Nature">
        <title>Sequence and analysis of chromosome 2 of the plant Arabidopsis thaliana.</title>
        <authorList>
            <person name="Lin X."/>
            <person name="Kaul S."/>
            <person name="Rounsley S.D."/>
            <person name="Shea T.P."/>
            <person name="Benito M.-I."/>
            <person name="Town C.D."/>
            <person name="Fujii C.Y."/>
            <person name="Mason T.M."/>
            <person name="Bowman C.L."/>
            <person name="Barnstead M.E."/>
            <person name="Feldblyum T.V."/>
            <person name="Buell C.R."/>
            <person name="Ketchum K.A."/>
            <person name="Lee J.J."/>
            <person name="Ronning C.M."/>
            <person name="Koo H.L."/>
            <person name="Moffat K.S."/>
            <person name="Cronin L.A."/>
            <person name="Shen M."/>
            <person name="Pai G."/>
            <person name="Van Aken S."/>
            <person name="Umayam L."/>
            <person name="Tallon L.J."/>
            <person name="Gill J.E."/>
            <person name="Adams M.D."/>
            <person name="Carrera A.J."/>
            <person name="Creasy T.H."/>
            <person name="Goodman H.M."/>
            <person name="Somerville C.R."/>
            <person name="Copenhaver G.P."/>
            <person name="Preuss D."/>
            <person name="Nierman W.C."/>
            <person name="White O."/>
            <person name="Eisen J.A."/>
            <person name="Salzberg S.L."/>
            <person name="Fraser C.M."/>
            <person name="Venter J.C."/>
        </authorList>
    </citation>
    <scope>NUCLEOTIDE SEQUENCE [LARGE SCALE GENOMIC DNA]</scope>
    <source>
        <strain>cv. Columbia</strain>
    </source>
</reference>
<reference key="2">
    <citation type="journal article" date="2017" name="Plant J.">
        <title>Araport11: a complete reannotation of the Arabidopsis thaliana reference genome.</title>
        <authorList>
            <person name="Cheng C.Y."/>
            <person name="Krishnakumar V."/>
            <person name="Chan A.P."/>
            <person name="Thibaud-Nissen F."/>
            <person name="Schobel S."/>
            <person name="Town C.D."/>
        </authorList>
    </citation>
    <scope>GENOME REANNOTATION</scope>
    <source>
        <strain>cv. Columbia</strain>
    </source>
</reference>
<reference key="3">
    <citation type="journal article" date="2003" name="Science">
        <title>Empirical analysis of transcriptional activity in the Arabidopsis genome.</title>
        <authorList>
            <person name="Yamada K."/>
            <person name="Lim J."/>
            <person name="Dale J.M."/>
            <person name="Chen H."/>
            <person name="Shinn P."/>
            <person name="Palm C.J."/>
            <person name="Southwick A.M."/>
            <person name="Wu H.C."/>
            <person name="Kim C.J."/>
            <person name="Nguyen M."/>
            <person name="Pham P.K."/>
            <person name="Cheuk R.F."/>
            <person name="Karlin-Newmann G."/>
            <person name="Liu S.X."/>
            <person name="Lam B."/>
            <person name="Sakano H."/>
            <person name="Wu T."/>
            <person name="Yu G."/>
            <person name="Miranda M."/>
            <person name="Quach H.L."/>
            <person name="Tripp M."/>
            <person name="Chang C.H."/>
            <person name="Lee J.M."/>
            <person name="Toriumi M.J."/>
            <person name="Chan M.M."/>
            <person name="Tang C.C."/>
            <person name="Onodera C.S."/>
            <person name="Deng J.M."/>
            <person name="Akiyama K."/>
            <person name="Ansari Y."/>
            <person name="Arakawa T."/>
            <person name="Banh J."/>
            <person name="Banno F."/>
            <person name="Bowser L."/>
            <person name="Brooks S.Y."/>
            <person name="Carninci P."/>
            <person name="Chao Q."/>
            <person name="Choy N."/>
            <person name="Enju A."/>
            <person name="Goldsmith A.D."/>
            <person name="Gurjal M."/>
            <person name="Hansen N.F."/>
            <person name="Hayashizaki Y."/>
            <person name="Johnson-Hopson C."/>
            <person name="Hsuan V.W."/>
            <person name="Iida K."/>
            <person name="Karnes M."/>
            <person name="Khan S."/>
            <person name="Koesema E."/>
            <person name="Ishida J."/>
            <person name="Jiang P.X."/>
            <person name="Jones T."/>
            <person name="Kawai J."/>
            <person name="Kamiya A."/>
            <person name="Meyers C."/>
            <person name="Nakajima M."/>
            <person name="Narusaka M."/>
            <person name="Seki M."/>
            <person name="Sakurai T."/>
            <person name="Satou M."/>
            <person name="Tamse R."/>
            <person name="Vaysberg M."/>
            <person name="Wallender E.K."/>
            <person name="Wong C."/>
            <person name="Yamamura Y."/>
            <person name="Yuan S."/>
            <person name="Shinozaki K."/>
            <person name="Davis R.W."/>
            <person name="Theologis A."/>
            <person name="Ecker J.R."/>
        </authorList>
    </citation>
    <scope>NUCLEOTIDE SEQUENCE [LARGE SCALE MRNA]</scope>
    <source>
        <strain>cv. Columbia</strain>
    </source>
</reference>
<reference key="4">
    <citation type="submission" date="2006-07" db="EMBL/GenBank/DDBJ databases">
        <title>Large-scale analysis of RIKEN Arabidopsis full-length (RAFL) cDNAs.</title>
        <authorList>
            <person name="Totoki Y."/>
            <person name="Seki M."/>
            <person name="Ishida J."/>
            <person name="Nakajima M."/>
            <person name="Enju A."/>
            <person name="Kamiya A."/>
            <person name="Narusaka M."/>
            <person name="Shin-i T."/>
            <person name="Nakagawa M."/>
            <person name="Sakamoto N."/>
            <person name="Oishi K."/>
            <person name="Kohara Y."/>
            <person name="Kobayashi M."/>
            <person name="Toyoda A."/>
            <person name="Sakaki Y."/>
            <person name="Sakurai T."/>
            <person name="Iida K."/>
            <person name="Akiyama K."/>
            <person name="Satou M."/>
            <person name="Toyoda T."/>
            <person name="Konagaya A."/>
            <person name="Carninci P."/>
            <person name="Kawai J."/>
            <person name="Hayashizaki Y."/>
            <person name="Shinozaki K."/>
        </authorList>
    </citation>
    <scope>NUCLEOTIDE SEQUENCE [LARGE SCALE MRNA]</scope>
    <source>
        <strain>cv. Columbia</strain>
    </source>
</reference>
<reference key="5">
    <citation type="journal article" date="2004" name="Trends Plant Sci.">
        <title>The growing family of mitochondrial carriers in Arabidopsis.</title>
        <authorList>
            <person name="Picault N."/>
            <person name="Hodges M."/>
            <person name="Palmieri L."/>
            <person name="Palmieri F."/>
        </authorList>
    </citation>
    <scope>GENE FAMILY</scope>
</reference>
<reference key="6">
    <citation type="journal article" date="2012" name="PLoS ONE">
        <title>The mitochondrial phosphate transporters modulate plant responses to salt stress via affecting ATP and gibberellin metabolism in Arabidopsis thaliana.</title>
        <authorList>
            <person name="Zhu W."/>
            <person name="Miao Q."/>
            <person name="Sun D."/>
            <person name="Yang G."/>
            <person name="Wu C."/>
            <person name="Huang J."/>
            <person name="Zheng C."/>
        </authorList>
    </citation>
    <scope>GENE FAMILY</scope>
    <scope>TISSUE SPECIFICITY</scope>
    <scope>INDUCTION BY SALT</scope>
    <scope>FUNCTION</scope>
</reference>
<gene>
    <name type="primary">MPT1</name>
    <name type="synonym">AT2</name>
    <name type="synonym">PHT3;3</name>
    <name type="ordered locus">At2g17270</name>
    <name type="ORF">F5J6</name>
</gene>
<comment type="function">
    <text evidence="3">Transport of phosphate groups from the cytosol to the mitochondrial matrix. Mediates salt stress tolerance through an ATP-dependent pathway and via modulation of the gibberellin metabolism.</text>
</comment>
<comment type="subcellular location">
    <subcellularLocation>
        <location evidence="1">Mitochondrion inner membrane</location>
        <topology evidence="1">Multi-pass membrane protein</topology>
    </subcellularLocation>
</comment>
<comment type="tissue specificity">
    <text evidence="3">Expressed in stems, leaves and flowers. Strong expression in the stamens of flowers.</text>
</comment>
<comment type="induction">
    <text evidence="3">By salt stress.</text>
</comment>
<comment type="miscellaneous">
    <text evidence="5">Plants overexpressing MPT1/PHT3;3 display increased sensitivity to salt stress.</text>
</comment>
<comment type="similarity">
    <text evidence="4">Belongs to the mitochondrial carrier (TC 2.A.29) family.</text>
</comment>